<organism>
    <name type="scientific">Picrophilus torridus (strain ATCC 700027 / DSM 9790 / JCM 10055 / NBRC 100828 / KAW 2/3)</name>
    <dbReference type="NCBI Taxonomy" id="1122961"/>
    <lineage>
        <taxon>Archaea</taxon>
        <taxon>Methanobacteriati</taxon>
        <taxon>Thermoplasmatota</taxon>
        <taxon>Thermoplasmata</taxon>
        <taxon>Thermoplasmatales</taxon>
        <taxon>Picrophilaceae</taxon>
        <taxon>Picrophilus</taxon>
    </lineage>
</organism>
<reference key="1">
    <citation type="journal article" date="2004" name="Proc. Natl. Acad. Sci. U.S.A.">
        <title>Genome sequence of Picrophilus torridus and its implications for life around pH 0.</title>
        <authorList>
            <person name="Fuetterer O."/>
            <person name="Angelov A."/>
            <person name="Liesegang H."/>
            <person name="Gottschalk G."/>
            <person name="Schleper C."/>
            <person name="Schepers B."/>
            <person name="Dock C."/>
            <person name="Antranikian G."/>
            <person name="Liebl W."/>
        </authorList>
    </citation>
    <scope>NUCLEOTIDE SEQUENCE [LARGE SCALE GENOMIC DNA]</scope>
    <source>
        <strain>ATCC 700027 / DSM 9790 / JCM 10055 / NBRC 100828 / KAW 2/3</strain>
    </source>
</reference>
<evidence type="ECO:0000255" key="1">
    <source>
        <dbReference type="HAMAP-Rule" id="MF_01508"/>
    </source>
</evidence>
<gene>
    <name evidence="1" type="primary">rfcL</name>
    <name type="ordered locus">PTO0873</name>
</gene>
<keyword id="KW-0067">ATP-binding</keyword>
<keyword id="KW-0235">DNA replication</keyword>
<keyword id="KW-0547">Nucleotide-binding</keyword>
<accession>Q6L0P4</accession>
<comment type="function">
    <text evidence="1">Part of the RFC clamp loader complex which loads the PCNA sliding clamp onto DNA.</text>
</comment>
<comment type="subunit">
    <text evidence="1">Heteromultimer composed of small subunits (RfcS) and large subunits (RfcL).</text>
</comment>
<comment type="similarity">
    <text evidence="1">Belongs to the activator 1 small subunits family. RfcL subfamily.</text>
</comment>
<dbReference type="EMBL" id="AE017261">
    <property type="protein sequence ID" value="AAT43458.1"/>
    <property type="molecule type" value="Genomic_DNA"/>
</dbReference>
<dbReference type="RefSeq" id="WP_011177674.1">
    <property type="nucleotide sequence ID" value="NC_005877.1"/>
</dbReference>
<dbReference type="SMR" id="Q6L0P4"/>
<dbReference type="STRING" id="263820.PTO0873"/>
<dbReference type="PaxDb" id="263820-PTO0873"/>
<dbReference type="GeneID" id="2844508"/>
<dbReference type="KEGG" id="pto:PTO0873"/>
<dbReference type="eggNOG" id="arCOG00470">
    <property type="taxonomic scope" value="Archaea"/>
</dbReference>
<dbReference type="HOGENOM" id="CLU_027255_1_1_2"/>
<dbReference type="InParanoid" id="Q6L0P4"/>
<dbReference type="OrthoDB" id="8658at2157"/>
<dbReference type="Proteomes" id="UP000000438">
    <property type="component" value="Chromosome"/>
</dbReference>
<dbReference type="GO" id="GO:0005524">
    <property type="term" value="F:ATP binding"/>
    <property type="evidence" value="ECO:0007669"/>
    <property type="project" value="UniProtKB-UniRule"/>
</dbReference>
<dbReference type="GO" id="GO:0016887">
    <property type="term" value="F:ATP hydrolysis activity"/>
    <property type="evidence" value="ECO:0007669"/>
    <property type="project" value="InterPro"/>
</dbReference>
<dbReference type="GO" id="GO:0003689">
    <property type="term" value="F:DNA clamp loader activity"/>
    <property type="evidence" value="ECO:0007669"/>
    <property type="project" value="UniProtKB-UniRule"/>
</dbReference>
<dbReference type="GO" id="GO:0006260">
    <property type="term" value="P:DNA replication"/>
    <property type="evidence" value="ECO:0007669"/>
    <property type="project" value="UniProtKB-UniRule"/>
</dbReference>
<dbReference type="Gene3D" id="1.10.8.60">
    <property type="match status" value="1"/>
</dbReference>
<dbReference type="Gene3D" id="3.40.50.300">
    <property type="entry name" value="P-loop containing nucleotide triphosphate hydrolases"/>
    <property type="match status" value="1"/>
</dbReference>
<dbReference type="HAMAP" id="MF_01508">
    <property type="entry name" value="RfcL"/>
    <property type="match status" value="1"/>
</dbReference>
<dbReference type="InterPro" id="IPR003593">
    <property type="entry name" value="AAA+_ATPase"/>
</dbReference>
<dbReference type="InterPro" id="IPR003959">
    <property type="entry name" value="ATPase_AAA_core"/>
</dbReference>
<dbReference type="InterPro" id="IPR027417">
    <property type="entry name" value="P-loop_NTPase"/>
</dbReference>
<dbReference type="InterPro" id="IPR023935">
    <property type="entry name" value="Rep_factor-C_lsu"/>
</dbReference>
<dbReference type="NCBIfam" id="NF003229">
    <property type="entry name" value="PRK04195.1-5"/>
    <property type="match status" value="1"/>
</dbReference>
<dbReference type="PANTHER" id="PTHR23389">
    <property type="entry name" value="CHROMOSOME TRANSMISSION FIDELITY FACTOR 18"/>
    <property type="match status" value="1"/>
</dbReference>
<dbReference type="PANTHER" id="PTHR23389:SF6">
    <property type="entry name" value="REPLICATION FACTOR C SUBUNIT 1"/>
    <property type="match status" value="1"/>
</dbReference>
<dbReference type="Pfam" id="PF00004">
    <property type="entry name" value="AAA"/>
    <property type="match status" value="1"/>
</dbReference>
<dbReference type="SMART" id="SM00382">
    <property type="entry name" value="AAA"/>
    <property type="match status" value="1"/>
</dbReference>
<dbReference type="SUPFAM" id="SSF52540">
    <property type="entry name" value="P-loop containing nucleoside triphosphate hydrolases"/>
    <property type="match status" value="1"/>
</dbReference>
<sequence>MAWADKYRPVDISELIMPSDELNSIIRWADSWRNNEVIKKSLILYGDPGTGKTTTATVIANYLNVPLIEMNASDERNADSMKRVALMSSLYSDLLSERRIPDRLILIDEADNIFESRDPKRGGDYGGITELLNVVKETRNPVIITMNDYYSFRSKRSGREIIDNSLVIEMRPYRRRNDQRYREFINKCLERCHYILKKEGKSLPENDIIRIIKENEPDIRSIINDLEAYAQDSNPGTRNKKIDIYRYVIDTFHSHDYDKLINSFSDADFDPDYYIKWIDQNLKEEYQDPEDLKNAYDILSIADLYSRLSYRANYMLTGISQEIAAGVSLMVKNKNRSTGRYSMPDIIKMYSSRKGINGARTLLEKLAALNHTSSNVIVSYLWFYRIIKRTAEFKRISRILDLSDNEVKQI</sequence>
<name>RFCL_PICTO</name>
<proteinExistence type="inferred from homology"/>
<protein>
    <recommendedName>
        <fullName evidence="1">Replication factor C large subunit</fullName>
        <shortName evidence="1">RFC large subunit</shortName>
    </recommendedName>
    <alternativeName>
        <fullName evidence="1">Clamp loader large subunit</fullName>
    </alternativeName>
</protein>
<feature type="chain" id="PRO_0000135959" description="Replication factor C large subunit">
    <location>
        <begin position="1"/>
        <end position="410"/>
    </location>
</feature>
<feature type="binding site" evidence="1">
    <location>
        <begin position="46"/>
        <end position="53"/>
    </location>
    <ligand>
        <name>ATP</name>
        <dbReference type="ChEBI" id="CHEBI:30616"/>
    </ligand>
</feature>